<sequence length="569" mass="61878">MAGGAREVLTLQLGHFAGFVGAHWWNQQDAALGRATDAKESPGELCPDVLYRTGRTLHGQDTCTPRLILMDLKGSLSSLKEEGGLYRDKQLDAAIAWQGKLTTHKEELCPKNPYLQDFLSTEGVLSSDGVWRVKSIPNGKGSPPLTTATTPKPLIPTEASIRVWSDFLRVHLHPRSICMIQKYNHDGEAGRLEAFGQGESVLKEPKYQEELEDRLHFYVEECDYLQGFQILCDLHDGFSGVGAKAAELLQDEYSGRGIITWGLLPGPYHRGEAQRNIYRLLNTAFGLVHLTAHSSLVCPLSLGGSLGLRPEPPVNFPYLHYDATLPFHCSAILATALDTVTVPYRLCSSPVSMVHLADMLSFCGKKVVTAGATIPFPLAPGQSLPDSLMQFGGATPWTPLSACGEPSGTRCFAQSVVLRGIDRACHTSQLTPGTPPPSSLHACTTGEEVLAQYLQQQQPRVMSSSHLLLTPYRVAPPYPHLFSSCSPQGMVLDGSPKGAVESIPVFGALCSSSSLHQTLEALARDLTKLDLRRWASFMDAGVEHDDVAELLQELQSLAQCYHAGDSLVD</sequence>
<dbReference type="EMBL" id="AB169308">
    <property type="protein sequence ID" value="BAE01394.1"/>
    <property type="status" value="ALT_FRAME"/>
    <property type="molecule type" value="mRNA"/>
</dbReference>
<dbReference type="STRING" id="9541.ENSMFAP00000006835"/>
<dbReference type="eggNOG" id="KOG2530">
    <property type="taxonomic scope" value="Eukaryota"/>
</dbReference>
<dbReference type="Proteomes" id="UP000233100">
    <property type="component" value="Unplaced"/>
</dbReference>
<dbReference type="GO" id="GO:0005741">
    <property type="term" value="C:mitochondrial outer membrane"/>
    <property type="evidence" value="ECO:0000250"/>
    <property type="project" value="UniProtKB"/>
</dbReference>
<dbReference type="GO" id="GO:0048311">
    <property type="term" value="P:mitochondrion distribution"/>
    <property type="evidence" value="ECO:0000250"/>
    <property type="project" value="UniProtKB"/>
</dbReference>
<dbReference type="GO" id="GO:0007005">
    <property type="term" value="P:mitochondrion organization"/>
    <property type="evidence" value="ECO:0000250"/>
    <property type="project" value="UniProtKB"/>
</dbReference>
<dbReference type="CDD" id="cd06060">
    <property type="entry name" value="misato"/>
    <property type="match status" value="1"/>
</dbReference>
<dbReference type="Gene3D" id="3.40.50.1440">
    <property type="entry name" value="Tubulin/FtsZ, GTPase domain"/>
    <property type="match status" value="1"/>
</dbReference>
<dbReference type="InterPro" id="IPR049942">
    <property type="entry name" value="DML1/Misato"/>
</dbReference>
<dbReference type="InterPro" id="IPR029209">
    <property type="entry name" value="DML1/Misato_tubulin"/>
</dbReference>
<dbReference type="InterPro" id="IPR019605">
    <property type="entry name" value="Misato_II_tubulin-like"/>
</dbReference>
<dbReference type="InterPro" id="IPR036525">
    <property type="entry name" value="Tubulin/FtsZ_GTPase_sf"/>
</dbReference>
<dbReference type="PANTHER" id="PTHR13391">
    <property type="entry name" value="MITOCHONDRIAL DISTRIBUTION REGULATOR MISATO"/>
    <property type="match status" value="1"/>
</dbReference>
<dbReference type="PANTHER" id="PTHR13391:SF0">
    <property type="entry name" value="PROTEIN MISATO HOMOLOG 1"/>
    <property type="match status" value="1"/>
</dbReference>
<dbReference type="Pfam" id="PF10644">
    <property type="entry name" value="Misat_Tub_SegII"/>
    <property type="match status" value="1"/>
</dbReference>
<dbReference type="Pfam" id="PF14881">
    <property type="entry name" value="Tubulin_3"/>
    <property type="match status" value="1"/>
</dbReference>
<dbReference type="SUPFAM" id="SSF52490">
    <property type="entry name" value="Tubulin nucleotide-binding domain-like"/>
    <property type="match status" value="1"/>
</dbReference>
<gene>
    <name type="primary">MSTO1</name>
    <name type="ORF">QtsA-18833</name>
</gene>
<feature type="chain" id="PRO_0000304627" description="Protein misato homolog 1">
    <location>
        <begin position="1"/>
        <end position="569"/>
    </location>
</feature>
<feature type="modified residue" description="Phosphoserine" evidence="1">
    <location>
        <position position="41"/>
    </location>
</feature>
<feature type="modified residue" description="Phosphoserine" evidence="2">
    <location>
        <position position="495"/>
    </location>
</feature>
<protein>
    <recommendedName>
        <fullName>Protein misato homolog 1</fullName>
    </recommendedName>
</protein>
<name>MSTO1_MACFA</name>
<reference key="1">
    <citation type="submission" date="2005-06" db="EMBL/GenBank/DDBJ databases">
        <title>DNA sequences of macaque genes expressed in brain or testis and its evolutionary implications.</title>
        <authorList>
            <consortium name="International consortium for macaque cDNA sequencing and analysis"/>
        </authorList>
    </citation>
    <scope>NUCLEOTIDE SEQUENCE [LARGE SCALE MRNA]</scope>
    <source>
        <tissue>Testis</tissue>
    </source>
</reference>
<organism>
    <name type="scientific">Macaca fascicularis</name>
    <name type="common">Crab-eating macaque</name>
    <name type="synonym">Cynomolgus monkey</name>
    <dbReference type="NCBI Taxonomy" id="9541"/>
    <lineage>
        <taxon>Eukaryota</taxon>
        <taxon>Metazoa</taxon>
        <taxon>Chordata</taxon>
        <taxon>Craniata</taxon>
        <taxon>Vertebrata</taxon>
        <taxon>Euteleostomi</taxon>
        <taxon>Mammalia</taxon>
        <taxon>Eutheria</taxon>
        <taxon>Euarchontoglires</taxon>
        <taxon>Primates</taxon>
        <taxon>Haplorrhini</taxon>
        <taxon>Catarrhini</taxon>
        <taxon>Cercopithecidae</taxon>
        <taxon>Cercopithecinae</taxon>
        <taxon>Macaca</taxon>
    </lineage>
</organism>
<comment type="function">
    <text evidence="2">Involved in the regulation of mitochondrial distribution and morphology. Required for mitochondrial fusion and mitochondrial network formation.</text>
</comment>
<comment type="subcellular location">
    <subcellularLocation>
        <location evidence="2">Mitochondrion outer membrane</location>
    </subcellularLocation>
    <subcellularLocation>
        <location evidence="2">Cytoplasm</location>
    </subcellularLocation>
</comment>
<comment type="similarity">
    <text evidence="3">Belongs to the misato family.</text>
</comment>
<comment type="sequence caution" evidence="3">
    <conflict type="frameshift">
        <sequence resource="EMBL-CDS" id="BAE01394"/>
    </conflict>
</comment>
<evidence type="ECO:0000250" key="1">
    <source>
        <dbReference type="UniProtKB" id="Q2YDW2"/>
    </source>
</evidence>
<evidence type="ECO:0000250" key="2">
    <source>
        <dbReference type="UniProtKB" id="Q9BUK6"/>
    </source>
</evidence>
<evidence type="ECO:0000305" key="3"/>
<accession>Q4R681</accession>
<keyword id="KW-0963">Cytoplasm</keyword>
<keyword id="KW-0472">Membrane</keyword>
<keyword id="KW-0496">Mitochondrion</keyword>
<keyword id="KW-1000">Mitochondrion outer membrane</keyword>
<keyword id="KW-0597">Phosphoprotein</keyword>
<keyword id="KW-1185">Reference proteome</keyword>
<proteinExistence type="evidence at transcript level"/>